<keyword id="KW-1003">Cell membrane</keyword>
<keyword id="KW-0963">Cytoplasm</keyword>
<keyword id="KW-0378">Hydrolase</keyword>
<keyword id="KW-0472">Membrane</keyword>
<keyword id="KW-0479">Metal-binding</keyword>
<keyword id="KW-1185">Reference proteome</keyword>
<keyword id="KW-0862">Zinc</keyword>
<sequence length="328" mass="36794">MTEEKAEEKNKMASVFLPALGGVAVCGGTHGNELSGVYLVQEMERQRKERGDGVWPIPVTTVLSNPRAVKECRRYIDTDMNRCFSKAVLSTPITDSSPYEVRRAQELNNLLGVKGSDDVMDMICDLHNTTSNMGLTLIHYSASDWVTLHICKYLQTKITKVPVRVLVLDFPINDAYNLESVSKHGFTLEVGPQPQGVVRADIYVIMKEAVDLTIDWIHKFNSGTVFEGGDVEVFKFIKSVDYPRDPETRNLTAAVHPQLQDRDFCLLKRGDPLFLSFSGETVTCEEEEPLHPFFINEGAYYEKGIAFHLAKKWTLTVPSVQVQTTNSA</sequence>
<comment type="function">
    <text evidence="1">Plays an important role in deacetylating mercapturic acids in kidney proximal tubules.</text>
</comment>
<comment type="catalytic activity">
    <reaction>
        <text>an N-acyl-aromatic L-alpha-amino acid + H2O = an aromatic L-alpha-amino acid + a carboxylate</text>
        <dbReference type="Rhea" id="RHEA:54184"/>
        <dbReference type="ChEBI" id="CHEBI:15377"/>
        <dbReference type="ChEBI" id="CHEBI:29067"/>
        <dbReference type="ChEBI" id="CHEBI:84824"/>
        <dbReference type="ChEBI" id="CHEBI:138093"/>
        <dbReference type="EC" id="3.5.1.114"/>
    </reaction>
</comment>
<comment type="catalytic activity">
    <reaction>
        <text>an N-acetyl-L-cysteine-S-conjugate + H2O = an S-substituted L-cysteine + acetate</text>
        <dbReference type="Rhea" id="RHEA:36855"/>
        <dbReference type="ChEBI" id="CHEBI:15377"/>
        <dbReference type="ChEBI" id="CHEBI:30089"/>
        <dbReference type="ChEBI" id="CHEBI:58717"/>
        <dbReference type="ChEBI" id="CHEBI:58718"/>
        <dbReference type="EC" id="3.5.1.114"/>
    </reaction>
</comment>
<comment type="cofactor">
    <cofactor evidence="3">
        <name>Zn(2+)</name>
        <dbReference type="ChEBI" id="CHEBI:29105"/>
    </cofactor>
    <text evidence="3">Binds 1 zinc ion per subunit.</text>
</comment>
<comment type="subunit">
    <text evidence="1">Homotetramer.</text>
</comment>
<comment type="subcellular location">
    <subcellularLocation>
        <location>Apical cell membrane</location>
        <topology>Peripheral membrane protein</topology>
    </subcellularLocation>
    <subcellularLocation>
        <location>Cytoplasm</location>
    </subcellularLocation>
</comment>
<comment type="similarity">
    <text evidence="3">Belongs to the AspA/AstE family. Aspartoacylase subfamily.</text>
</comment>
<accession>Q6DHI0</accession>
<accession>A2BG58</accession>
<protein>
    <recommendedName>
        <fullName>N-acyl-aromatic-L-amino acid amidohydrolase (carboxylate-forming) A</fullName>
        <ecNumber>3.5.1.114</ecNumber>
    </recommendedName>
    <alternativeName>
        <fullName>Aminoacylase-3.1</fullName>
        <shortName>ACY-3.1</shortName>
    </alternativeName>
    <alternativeName>
        <fullName>Aspartoacylase-2A</fullName>
    </alternativeName>
</protein>
<feature type="chain" id="PRO_0000363363" description="N-acyl-aromatic-L-amino acid amidohydrolase (carboxylate-forming) A">
    <location>
        <begin position="1"/>
        <end position="328"/>
    </location>
</feature>
<feature type="binding site" evidence="2">
    <location>
        <position position="30"/>
    </location>
    <ligand>
        <name>Zn(2+)</name>
        <dbReference type="ChEBI" id="CHEBI:29105"/>
    </ligand>
</feature>
<feature type="binding site" evidence="2">
    <location>
        <position position="33"/>
    </location>
    <ligand>
        <name>Zn(2+)</name>
        <dbReference type="ChEBI" id="CHEBI:29105"/>
    </ligand>
</feature>
<feature type="binding site" evidence="2">
    <location>
        <position position="74"/>
    </location>
    <ligand>
        <name>substrate</name>
    </ligand>
</feature>
<feature type="binding site" evidence="2">
    <location>
        <begin position="81"/>
        <end position="82"/>
    </location>
    <ligand>
        <name>substrate</name>
    </ligand>
</feature>
<feature type="binding site" evidence="2">
    <location>
        <position position="127"/>
    </location>
    <ligand>
        <name>Zn(2+)</name>
        <dbReference type="ChEBI" id="CHEBI:29105"/>
    </ligand>
</feature>
<feature type="binding site" evidence="2">
    <location>
        <position position="189"/>
    </location>
    <ligand>
        <name>substrate</name>
    </ligand>
</feature>
<feature type="binding site" evidence="2">
    <location>
        <position position="300"/>
    </location>
    <ligand>
        <name>substrate</name>
    </ligand>
</feature>
<feature type="sequence conflict" description="In Ref. 2; AAH75994." evidence="3" ref="2">
    <original>R</original>
    <variation>K</variation>
    <location>
        <position position="50"/>
    </location>
</feature>
<feature type="sequence conflict" description="In Ref. 2; AAH75994." evidence="3" ref="2">
    <original>G</original>
    <variation>S</variation>
    <location>
        <position position="53"/>
    </location>
</feature>
<feature type="sequence conflict" description="In Ref. 2; AAH75994." evidence="3" ref="2">
    <original>V</original>
    <variation>A</variation>
    <location>
        <position position="233"/>
    </location>
</feature>
<feature type="sequence conflict" description="In Ref. 2; AAH75994." evidence="3" ref="2">
    <original>T</original>
    <variation>I</variation>
    <location>
        <position position="314"/>
    </location>
</feature>
<feature type="sequence conflict" description="In Ref. 2; AAH75994." evidence="3" ref="2">
    <original>QTT</original>
    <variation>HTK</variation>
    <location>
        <begin position="323"/>
        <end position="325"/>
    </location>
</feature>
<reference key="1">
    <citation type="journal article" date="2013" name="Nature">
        <title>The zebrafish reference genome sequence and its relationship to the human genome.</title>
        <authorList>
            <person name="Howe K."/>
            <person name="Clark M.D."/>
            <person name="Torroja C.F."/>
            <person name="Torrance J."/>
            <person name="Berthelot C."/>
            <person name="Muffato M."/>
            <person name="Collins J.E."/>
            <person name="Humphray S."/>
            <person name="McLaren K."/>
            <person name="Matthews L."/>
            <person name="McLaren S."/>
            <person name="Sealy I."/>
            <person name="Caccamo M."/>
            <person name="Churcher C."/>
            <person name="Scott C."/>
            <person name="Barrett J.C."/>
            <person name="Koch R."/>
            <person name="Rauch G.J."/>
            <person name="White S."/>
            <person name="Chow W."/>
            <person name="Kilian B."/>
            <person name="Quintais L.T."/>
            <person name="Guerra-Assuncao J.A."/>
            <person name="Zhou Y."/>
            <person name="Gu Y."/>
            <person name="Yen J."/>
            <person name="Vogel J.H."/>
            <person name="Eyre T."/>
            <person name="Redmond S."/>
            <person name="Banerjee R."/>
            <person name="Chi J."/>
            <person name="Fu B."/>
            <person name="Langley E."/>
            <person name="Maguire S.F."/>
            <person name="Laird G.K."/>
            <person name="Lloyd D."/>
            <person name="Kenyon E."/>
            <person name="Donaldson S."/>
            <person name="Sehra H."/>
            <person name="Almeida-King J."/>
            <person name="Loveland J."/>
            <person name="Trevanion S."/>
            <person name="Jones M."/>
            <person name="Quail M."/>
            <person name="Willey D."/>
            <person name="Hunt A."/>
            <person name="Burton J."/>
            <person name="Sims S."/>
            <person name="McLay K."/>
            <person name="Plumb B."/>
            <person name="Davis J."/>
            <person name="Clee C."/>
            <person name="Oliver K."/>
            <person name="Clark R."/>
            <person name="Riddle C."/>
            <person name="Elliot D."/>
            <person name="Threadgold G."/>
            <person name="Harden G."/>
            <person name="Ware D."/>
            <person name="Begum S."/>
            <person name="Mortimore B."/>
            <person name="Kerry G."/>
            <person name="Heath P."/>
            <person name="Phillimore B."/>
            <person name="Tracey A."/>
            <person name="Corby N."/>
            <person name="Dunn M."/>
            <person name="Johnson C."/>
            <person name="Wood J."/>
            <person name="Clark S."/>
            <person name="Pelan S."/>
            <person name="Griffiths G."/>
            <person name="Smith M."/>
            <person name="Glithero R."/>
            <person name="Howden P."/>
            <person name="Barker N."/>
            <person name="Lloyd C."/>
            <person name="Stevens C."/>
            <person name="Harley J."/>
            <person name="Holt K."/>
            <person name="Panagiotidis G."/>
            <person name="Lovell J."/>
            <person name="Beasley H."/>
            <person name="Henderson C."/>
            <person name="Gordon D."/>
            <person name="Auger K."/>
            <person name="Wright D."/>
            <person name="Collins J."/>
            <person name="Raisen C."/>
            <person name="Dyer L."/>
            <person name="Leung K."/>
            <person name="Robertson L."/>
            <person name="Ambridge K."/>
            <person name="Leongamornlert D."/>
            <person name="McGuire S."/>
            <person name="Gilderthorp R."/>
            <person name="Griffiths C."/>
            <person name="Manthravadi D."/>
            <person name="Nichol S."/>
            <person name="Barker G."/>
            <person name="Whitehead S."/>
            <person name="Kay M."/>
            <person name="Brown J."/>
            <person name="Murnane C."/>
            <person name="Gray E."/>
            <person name="Humphries M."/>
            <person name="Sycamore N."/>
            <person name="Barker D."/>
            <person name="Saunders D."/>
            <person name="Wallis J."/>
            <person name="Babbage A."/>
            <person name="Hammond S."/>
            <person name="Mashreghi-Mohammadi M."/>
            <person name="Barr L."/>
            <person name="Martin S."/>
            <person name="Wray P."/>
            <person name="Ellington A."/>
            <person name="Matthews N."/>
            <person name="Ellwood M."/>
            <person name="Woodmansey R."/>
            <person name="Clark G."/>
            <person name="Cooper J."/>
            <person name="Tromans A."/>
            <person name="Grafham D."/>
            <person name="Skuce C."/>
            <person name="Pandian R."/>
            <person name="Andrews R."/>
            <person name="Harrison E."/>
            <person name="Kimberley A."/>
            <person name="Garnett J."/>
            <person name="Fosker N."/>
            <person name="Hall R."/>
            <person name="Garner P."/>
            <person name="Kelly D."/>
            <person name="Bird C."/>
            <person name="Palmer S."/>
            <person name="Gehring I."/>
            <person name="Berger A."/>
            <person name="Dooley C.M."/>
            <person name="Ersan-Urun Z."/>
            <person name="Eser C."/>
            <person name="Geiger H."/>
            <person name="Geisler M."/>
            <person name="Karotki L."/>
            <person name="Kirn A."/>
            <person name="Konantz J."/>
            <person name="Konantz M."/>
            <person name="Oberlander M."/>
            <person name="Rudolph-Geiger S."/>
            <person name="Teucke M."/>
            <person name="Lanz C."/>
            <person name="Raddatz G."/>
            <person name="Osoegawa K."/>
            <person name="Zhu B."/>
            <person name="Rapp A."/>
            <person name="Widaa S."/>
            <person name="Langford C."/>
            <person name="Yang F."/>
            <person name="Schuster S.C."/>
            <person name="Carter N.P."/>
            <person name="Harrow J."/>
            <person name="Ning Z."/>
            <person name="Herrero J."/>
            <person name="Searle S.M."/>
            <person name="Enright A."/>
            <person name="Geisler R."/>
            <person name="Plasterk R.H."/>
            <person name="Lee C."/>
            <person name="Westerfield M."/>
            <person name="de Jong P.J."/>
            <person name="Zon L.I."/>
            <person name="Postlethwait J.H."/>
            <person name="Nusslein-Volhard C."/>
            <person name="Hubbard T.J."/>
            <person name="Roest Crollius H."/>
            <person name="Rogers J."/>
            <person name="Stemple D.L."/>
        </authorList>
    </citation>
    <scope>NUCLEOTIDE SEQUENCE [LARGE SCALE GENOMIC DNA]</scope>
    <source>
        <strain>Tuebingen</strain>
    </source>
</reference>
<reference key="2">
    <citation type="submission" date="2004-07" db="EMBL/GenBank/DDBJ databases">
        <authorList>
            <consortium name="NIH - Zebrafish Gene Collection (ZGC) project"/>
        </authorList>
    </citation>
    <scope>NUCLEOTIDE SEQUENCE [LARGE SCALE MRNA]</scope>
</reference>
<dbReference type="EC" id="3.5.1.114"/>
<dbReference type="EMBL" id="BX323839">
    <property type="protein sequence ID" value="CAM14060.1"/>
    <property type="molecule type" value="Genomic_DNA"/>
</dbReference>
<dbReference type="EMBL" id="BC075994">
    <property type="protein sequence ID" value="AAH75994.1"/>
    <property type="molecule type" value="mRNA"/>
</dbReference>
<dbReference type="RefSeq" id="NP_001138833.1">
    <property type="nucleotide sequence ID" value="NM_001145361.1"/>
</dbReference>
<dbReference type="SMR" id="Q6DHI0"/>
<dbReference type="FunCoup" id="Q6DHI0">
    <property type="interactions" value="1"/>
</dbReference>
<dbReference type="STRING" id="7955.ENSDARP00000052906"/>
<dbReference type="PaxDb" id="7955-ENSDARP00000052906"/>
<dbReference type="Ensembl" id="ENSDART00000052907">
    <property type="protein sequence ID" value="ENSDARP00000052906"/>
    <property type="gene ID" value="ENSDARG00000093003"/>
</dbReference>
<dbReference type="GeneID" id="791456"/>
<dbReference type="KEGG" id="dre:791456"/>
<dbReference type="AGR" id="ZFIN:ZDB-GENE-040718-345"/>
<dbReference type="CTD" id="791456"/>
<dbReference type="ZFIN" id="ZDB-GENE-040718-345">
    <property type="gene designation" value="acy3.1"/>
</dbReference>
<dbReference type="eggNOG" id="ENOG502REAZ">
    <property type="taxonomic scope" value="Eukaryota"/>
</dbReference>
<dbReference type="HOGENOM" id="CLU_083292_0_0_1"/>
<dbReference type="InParanoid" id="Q6DHI0"/>
<dbReference type="OMA" id="VIMHIYR"/>
<dbReference type="OrthoDB" id="8300214at2759"/>
<dbReference type="PhylomeDB" id="Q6DHI0"/>
<dbReference type="TreeFam" id="TF328708"/>
<dbReference type="Reactome" id="R-DRE-5423646">
    <property type="pathway name" value="Aflatoxin activation and detoxification"/>
</dbReference>
<dbReference type="PRO" id="PR:Q6DHI0"/>
<dbReference type="Proteomes" id="UP000000437">
    <property type="component" value="Chromosome 1"/>
</dbReference>
<dbReference type="Bgee" id="ENSDARG00000093003">
    <property type="expression patterns" value="Expressed in mature ovarian follicle and 20 other cell types or tissues"/>
</dbReference>
<dbReference type="GO" id="GO:0016324">
    <property type="term" value="C:apical plasma membrane"/>
    <property type="evidence" value="ECO:0007669"/>
    <property type="project" value="UniProtKB-SubCell"/>
</dbReference>
<dbReference type="GO" id="GO:0005829">
    <property type="term" value="C:cytosol"/>
    <property type="evidence" value="ECO:0000318"/>
    <property type="project" value="GO_Central"/>
</dbReference>
<dbReference type="GO" id="GO:0004046">
    <property type="term" value="F:aminoacylase activity"/>
    <property type="evidence" value="ECO:0000318"/>
    <property type="project" value="GO_Central"/>
</dbReference>
<dbReference type="GO" id="GO:0016788">
    <property type="term" value="F:hydrolase activity, acting on ester bonds"/>
    <property type="evidence" value="ECO:0007669"/>
    <property type="project" value="InterPro"/>
</dbReference>
<dbReference type="GO" id="GO:0046872">
    <property type="term" value="F:metal ion binding"/>
    <property type="evidence" value="ECO:0007669"/>
    <property type="project" value="UniProtKB-KW"/>
</dbReference>
<dbReference type="CDD" id="cd06909">
    <property type="entry name" value="M14_ASPA"/>
    <property type="match status" value="1"/>
</dbReference>
<dbReference type="FunFam" id="3.40.630.10:FF:000025">
    <property type="entry name" value="aspartoacylase"/>
    <property type="match status" value="1"/>
</dbReference>
<dbReference type="Gene3D" id="2.20.25.160">
    <property type="match status" value="1"/>
</dbReference>
<dbReference type="Gene3D" id="3.40.630.10">
    <property type="entry name" value="Zn peptidases"/>
    <property type="match status" value="1"/>
</dbReference>
<dbReference type="HAMAP" id="MF_00704">
    <property type="entry name" value="Aspartoacylase"/>
    <property type="match status" value="1"/>
</dbReference>
<dbReference type="InterPro" id="IPR050178">
    <property type="entry name" value="AspA/AstE_fam"/>
</dbReference>
<dbReference type="InterPro" id="IPR016708">
    <property type="entry name" value="Aspartoacylase"/>
</dbReference>
<dbReference type="InterPro" id="IPR055438">
    <property type="entry name" value="AstE_AspA_cat"/>
</dbReference>
<dbReference type="InterPro" id="IPR007036">
    <property type="entry name" value="Aste_AspA_hybrid_dom"/>
</dbReference>
<dbReference type="NCBIfam" id="NF002601">
    <property type="entry name" value="PRK02259.1"/>
    <property type="match status" value="1"/>
</dbReference>
<dbReference type="PANTHER" id="PTHR15162">
    <property type="entry name" value="ASPARTOACYLASE"/>
    <property type="match status" value="1"/>
</dbReference>
<dbReference type="PANTHER" id="PTHR15162:SF5">
    <property type="entry name" value="N-ACYL-AROMATIC-L-AMINO ACID AMIDOHYDROLASE (CARBOXYLATE-FORMING)"/>
    <property type="match status" value="1"/>
</dbReference>
<dbReference type="Pfam" id="PF24827">
    <property type="entry name" value="AstE_AspA_cat"/>
    <property type="match status" value="1"/>
</dbReference>
<dbReference type="Pfam" id="PF04952">
    <property type="entry name" value="AstE_AspA_hybrid"/>
    <property type="match status" value="1"/>
</dbReference>
<dbReference type="PIRSF" id="PIRSF018001">
    <property type="entry name" value="Aspartoacylase"/>
    <property type="match status" value="1"/>
</dbReference>
<dbReference type="SUPFAM" id="SSF53187">
    <property type="entry name" value="Zn-dependent exopeptidases"/>
    <property type="match status" value="1"/>
</dbReference>
<organism>
    <name type="scientific">Danio rerio</name>
    <name type="common">Zebrafish</name>
    <name type="synonym">Brachydanio rerio</name>
    <dbReference type="NCBI Taxonomy" id="7955"/>
    <lineage>
        <taxon>Eukaryota</taxon>
        <taxon>Metazoa</taxon>
        <taxon>Chordata</taxon>
        <taxon>Craniata</taxon>
        <taxon>Vertebrata</taxon>
        <taxon>Euteleostomi</taxon>
        <taxon>Actinopterygii</taxon>
        <taxon>Neopterygii</taxon>
        <taxon>Teleostei</taxon>
        <taxon>Ostariophysi</taxon>
        <taxon>Cypriniformes</taxon>
        <taxon>Danionidae</taxon>
        <taxon>Danioninae</taxon>
        <taxon>Danio</taxon>
    </lineage>
</organism>
<proteinExistence type="evidence at transcript level"/>
<gene>
    <name type="primary">acy3.1</name>
    <name type="ORF">si:ch211-217k17.2</name>
    <name type="ORF">zgc:92306</name>
</gene>
<name>ACY3A_DANRE</name>
<evidence type="ECO:0000250" key="1"/>
<evidence type="ECO:0000255" key="2"/>
<evidence type="ECO:0000305" key="3"/>